<accession>A1VXV6</accession>
<feature type="chain" id="PRO_1000003133" description="Ribosome-recycling factor">
    <location>
        <begin position="1"/>
        <end position="185"/>
    </location>
</feature>
<name>RRF_CAMJJ</name>
<evidence type="ECO:0000255" key="1">
    <source>
        <dbReference type="HAMAP-Rule" id="MF_00040"/>
    </source>
</evidence>
<sequence>MLNEIFNKQKTQSEKSLEALKKDFTTLRTGKVNIHILDHITVDYYGTQTPLNQVATVLASDASTISITPWEKPLLKTIESAIAAANIGVNPNNDGESVKLFFPPMTREQREENVKQAKAMGEKAKVSIRNIRKDANDAVKKLEKDKAISEDEAKKAYDEVQKLTDTYTTKIDESVKSKESELLKV</sequence>
<keyword id="KW-0963">Cytoplasm</keyword>
<keyword id="KW-0648">Protein biosynthesis</keyword>
<gene>
    <name evidence="1" type="primary">frr</name>
    <name type="ordered locus">CJJ81176_0259</name>
</gene>
<proteinExistence type="inferred from homology"/>
<comment type="function">
    <text evidence="1">Responsible for the release of ribosomes from messenger RNA at the termination of protein biosynthesis. May increase the efficiency of translation by recycling ribosomes from one round of translation to another.</text>
</comment>
<comment type="subcellular location">
    <subcellularLocation>
        <location evidence="1">Cytoplasm</location>
    </subcellularLocation>
</comment>
<comment type="similarity">
    <text evidence="1">Belongs to the RRF family.</text>
</comment>
<reference key="1">
    <citation type="submission" date="2006-12" db="EMBL/GenBank/DDBJ databases">
        <authorList>
            <person name="Fouts D.E."/>
            <person name="Nelson K.E."/>
            <person name="Sebastian Y."/>
        </authorList>
    </citation>
    <scope>NUCLEOTIDE SEQUENCE [LARGE SCALE GENOMIC DNA]</scope>
    <source>
        <strain>81-176</strain>
    </source>
</reference>
<dbReference type="EMBL" id="CP000538">
    <property type="protein sequence ID" value="EAQ73437.1"/>
    <property type="molecule type" value="Genomic_DNA"/>
</dbReference>
<dbReference type="SMR" id="A1VXV6"/>
<dbReference type="KEGG" id="cjj:CJJ81176_0259"/>
<dbReference type="eggNOG" id="COG0233">
    <property type="taxonomic scope" value="Bacteria"/>
</dbReference>
<dbReference type="HOGENOM" id="CLU_073981_2_0_7"/>
<dbReference type="Proteomes" id="UP000000646">
    <property type="component" value="Chromosome"/>
</dbReference>
<dbReference type="GO" id="GO:0005829">
    <property type="term" value="C:cytosol"/>
    <property type="evidence" value="ECO:0007669"/>
    <property type="project" value="GOC"/>
</dbReference>
<dbReference type="GO" id="GO:0043023">
    <property type="term" value="F:ribosomal large subunit binding"/>
    <property type="evidence" value="ECO:0007669"/>
    <property type="project" value="TreeGrafter"/>
</dbReference>
<dbReference type="GO" id="GO:0002184">
    <property type="term" value="P:cytoplasmic translational termination"/>
    <property type="evidence" value="ECO:0007669"/>
    <property type="project" value="TreeGrafter"/>
</dbReference>
<dbReference type="CDD" id="cd00520">
    <property type="entry name" value="RRF"/>
    <property type="match status" value="1"/>
</dbReference>
<dbReference type="FunFam" id="1.10.132.20:FF:000001">
    <property type="entry name" value="Ribosome-recycling factor"/>
    <property type="match status" value="1"/>
</dbReference>
<dbReference type="FunFam" id="3.30.1360.40:FF:000001">
    <property type="entry name" value="Ribosome-recycling factor"/>
    <property type="match status" value="1"/>
</dbReference>
<dbReference type="Gene3D" id="3.30.1360.40">
    <property type="match status" value="1"/>
</dbReference>
<dbReference type="Gene3D" id="1.10.132.20">
    <property type="entry name" value="Ribosome-recycling factor"/>
    <property type="match status" value="1"/>
</dbReference>
<dbReference type="HAMAP" id="MF_00040">
    <property type="entry name" value="RRF"/>
    <property type="match status" value="1"/>
</dbReference>
<dbReference type="InterPro" id="IPR002661">
    <property type="entry name" value="Ribosome_recyc_fac"/>
</dbReference>
<dbReference type="InterPro" id="IPR023584">
    <property type="entry name" value="Ribosome_recyc_fac_dom"/>
</dbReference>
<dbReference type="InterPro" id="IPR036191">
    <property type="entry name" value="RRF_sf"/>
</dbReference>
<dbReference type="NCBIfam" id="TIGR00496">
    <property type="entry name" value="frr"/>
    <property type="match status" value="1"/>
</dbReference>
<dbReference type="PANTHER" id="PTHR20982:SF3">
    <property type="entry name" value="MITOCHONDRIAL RIBOSOME RECYCLING FACTOR PSEUDO 1"/>
    <property type="match status" value="1"/>
</dbReference>
<dbReference type="PANTHER" id="PTHR20982">
    <property type="entry name" value="RIBOSOME RECYCLING FACTOR"/>
    <property type="match status" value="1"/>
</dbReference>
<dbReference type="Pfam" id="PF01765">
    <property type="entry name" value="RRF"/>
    <property type="match status" value="1"/>
</dbReference>
<dbReference type="SUPFAM" id="SSF55194">
    <property type="entry name" value="Ribosome recycling factor, RRF"/>
    <property type="match status" value="1"/>
</dbReference>
<organism>
    <name type="scientific">Campylobacter jejuni subsp. jejuni serotype O:23/36 (strain 81-176)</name>
    <dbReference type="NCBI Taxonomy" id="354242"/>
    <lineage>
        <taxon>Bacteria</taxon>
        <taxon>Pseudomonadati</taxon>
        <taxon>Campylobacterota</taxon>
        <taxon>Epsilonproteobacteria</taxon>
        <taxon>Campylobacterales</taxon>
        <taxon>Campylobacteraceae</taxon>
        <taxon>Campylobacter</taxon>
    </lineage>
</organism>
<protein>
    <recommendedName>
        <fullName evidence="1">Ribosome-recycling factor</fullName>
        <shortName evidence="1">RRF</shortName>
    </recommendedName>
    <alternativeName>
        <fullName evidence="1">Ribosome-releasing factor</fullName>
    </alternativeName>
</protein>